<keyword id="KW-0285">Flavoprotein</keyword>
<keyword id="KW-0288">FMN</keyword>
<keyword id="KW-0418">Kinase</keyword>
<keyword id="KW-0460">Magnesium</keyword>
<keyword id="KW-0479">Metal-binding</keyword>
<keyword id="KW-0547">Nucleotide-binding</keyword>
<keyword id="KW-0808">Transferase</keyword>
<dbReference type="EC" id="2.7.1.161"/>
<dbReference type="EMBL" id="CP000099">
    <property type="protein sequence ID" value="AAZ70474.1"/>
    <property type="molecule type" value="Genomic_DNA"/>
</dbReference>
<dbReference type="SMR" id="Q46CB8"/>
<dbReference type="STRING" id="269797.Mbar_A1523"/>
<dbReference type="PaxDb" id="269797-Mbar_A1523"/>
<dbReference type="KEGG" id="mba:Mbar_A1523"/>
<dbReference type="eggNOG" id="arCOG01904">
    <property type="taxonomic scope" value="Archaea"/>
</dbReference>
<dbReference type="HOGENOM" id="CLU_088476_0_0_2"/>
<dbReference type="OrthoDB" id="30955at2157"/>
<dbReference type="UniPathway" id="UPA00276">
    <property type="reaction ID" value="UER00929"/>
</dbReference>
<dbReference type="GO" id="GO:0000287">
    <property type="term" value="F:magnesium ion binding"/>
    <property type="evidence" value="ECO:0007669"/>
    <property type="project" value="UniProtKB-UniRule"/>
</dbReference>
<dbReference type="GO" id="GO:0000166">
    <property type="term" value="F:nucleotide binding"/>
    <property type="evidence" value="ECO:0007669"/>
    <property type="project" value="UniProtKB-UniRule"/>
</dbReference>
<dbReference type="GO" id="GO:0008531">
    <property type="term" value="F:riboflavin kinase activity"/>
    <property type="evidence" value="ECO:0007669"/>
    <property type="project" value="InterPro"/>
</dbReference>
<dbReference type="GO" id="GO:0009398">
    <property type="term" value="P:FMN biosynthetic process"/>
    <property type="evidence" value="ECO:0007669"/>
    <property type="project" value="UniProtKB-UniRule"/>
</dbReference>
<dbReference type="GO" id="GO:0009231">
    <property type="term" value="P:riboflavin biosynthetic process"/>
    <property type="evidence" value="ECO:0007669"/>
    <property type="project" value="InterPro"/>
</dbReference>
<dbReference type="Gene3D" id="2.40.30.30">
    <property type="entry name" value="Riboflavin kinase-like"/>
    <property type="match status" value="1"/>
</dbReference>
<dbReference type="Gene3D" id="1.10.10.10">
    <property type="entry name" value="Winged helix-like DNA-binding domain superfamily/Winged helix DNA-binding domain"/>
    <property type="match status" value="1"/>
</dbReference>
<dbReference type="HAMAP" id="MF_01285">
    <property type="entry name" value="Riboflavin_kinase"/>
    <property type="match status" value="1"/>
</dbReference>
<dbReference type="InterPro" id="IPR039063">
    <property type="entry name" value="RibK_CTP-dep"/>
</dbReference>
<dbReference type="InterPro" id="IPR023470">
    <property type="entry name" value="Riboflavin_kinase_archaeal"/>
</dbReference>
<dbReference type="InterPro" id="IPR023602">
    <property type="entry name" value="Riboflavin_kinase_CTP-dep"/>
</dbReference>
<dbReference type="InterPro" id="IPR023465">
    <property type="entry name" value="Riboflavin_kinase_dom_sf"/>
</dbReference>
<dbReference type="InterPro" id="IPR036388">
    <property type="entry name" value="WH-like_DNA-bd_sf"/>
</dbReference>
<dbReference type="InterPro" id="IPR036390">
    <property type="entry name" value="WH_DNA-bd_sf"/>
</dbReference>
<dbReference type="NCBIfam" id="NF010762">
    <property type="entry name" value="PRK14165.1"/>
    <property type="match status" value="1"/>
</dbReference>
<dbReference type="PANTHER" id="PTHR40706">
    <property type="entry name" value="RIBOFLAVIN KINASE"/>
    <property type="match status" value="1"/>
</dbReference>
<dbReference type="PANTHER" id="PTHR40706:SF1">
    <property type="entry name" value="RIBOFLAVIN KINASE"/>
    <property type="match status" value="1"/>
</dbReference>
<dbReference type="Pfam" id="PF01982">
    <property type="entry name" value="CTP-dep_RFKase"/>
    <property type="match status" value="1"/>
</dbReference>
<dbReference type="SUPFAM" id="SSF82114">
    <property type="entry name" value="Riboflavin kinase-like"/>
    <property type="match status" value="1"/>
</dbReference>
<dbReference type="SUPFAM" id="SSF46785">
    <property type="entry name" value="Winged helix' DNA-binding domain"/>
    <property type="match status" value="1"/>
</dbReference>
<name>RIFK_METBF</name>
<accession>Q46CB8</accession>
<reference key="1">
    <citation type="journal article" date="2006" name="J. Bacteriol.">
        <title>The Methanosarcina barkeri genome: comparative analysis with Methanosarcina acetivorans and Methanosarcina mazei reveals extensive rearrangement within methanosarcinal genomes.</title>
        <authorList>
            <person name="Maeder D.L."/>
            <person name="Anderson I."/>
            <person name="Brettin T.S."/>
            <person name="Bruce D.C."/>
            <person name="Gilna P."/>
            <person name="Han C.S."/>
            <person name="Lapidus A."/>
            <person name="Metcalf W.W."/>
            <person name="Saunders E."/>
            <person name="Tapia R."/>
            <person name="Sowers K.R."/>
        </authorList>
    </citation>
    <scope>NUCLEOTIDE SEQUENCE [LARGE SCALE GENOMIC DNA]</scope>
    <source>
        <strain>Fusaro / DSM 804</strain>
    </source>
</reference>
<comment type="function">
    <text evidence="1">Catalyzes the CTP-dependent phosphorylation of riboflavin (vitamin B2) to form flavin mononucleotide (FMN).</text>
</comment>
<comment type="catalytic activity">
    <reaction>
        <text>riboflavin + CTP = CDP + FMN + H(+)</text>
        <dbReference type="Rhea" id="RHEA:25021"/>
        <dbReference type="ChEBI" id="CHEBI:15378"/>
        <dbReference type="ChEBI" id="CHEBI:37563"/>
        <dbReference type="ChEBI" id="CHEBI:57986"/>
        <dbReference type="ChEBI" id="CHEBI:58069"/>
        <dbReference type="ChEBI" id="CHEBI:58210"/>
        <dbReference type="EC" id="2.7.1.161"/>
    </reaction>
</comment>
<comment type="cofactor">
    <cofactor evidence="1">
        <name>Mg(2+)</name>
        <dbReference type="ChEBI" id="CHEBI:18420"/>
    </cofactor>
    <text evidence="1">Binds 1 Mg(2+) ion per subunit.</text>
</comment>
<comment type="pathway">
    <text>Cofactor biosynthesis; FMN biosynthesis; FMN from riboflavin (CTP route): step 1/1.</text>
</comment>
<comment type="similarity">
    <text evidence="2">Belongs to the archaeal riboflavin kinase family.</text>
</comment>
<sequence length="225" mass="25167">MPDIKYLKKLALIGAINKIIKVSSSEFQKHTGASSKTTARKLKQLEDERLIERKIVPGGQLIKMTDKGIEVLKNEYVDYSRIFSPDLDILELEGKVLKGLGEGQYYVNIPGYRKQFEEKLHFVPFPGTLNVQLSESSSSLRNLLLETPAIRVEGFNDGERTFGGGKCYPVVVGSIEAAVVVPERTHYPSDLIEIIAPIKLRDALKLKDGDRVVVQLKKQGTENQK</sequence>
<evidence type="ECO:0000250" key="1"/>
<evidence type="ECO:0000305" key="2"/>
<proteinExistence type="inferred from homology"/>
<protein>
    <recommendedName>
        <fullName>Riboflavin kinase</fullName>
        <shortName>RFK</shortName>
        <ecNumber>2.7.1.161</ecNumber>
    </recommendedName>
    <alternativeName>
        <fullName>CTP-dependent riboflavin kinase</fullName>
    </alternativeName>
    <alternativeName>
        <fullName>CTP:riboflavin 5'-phosphotransferase</fullName>
    </alternativeName>
    <alternativeName>
        <fullName>Flavokinase</fullName>
    </alternativeName>
</protein>
<feature type="chain" id="PRO_0000322089" description="Riboflavin kinase">
    <location>
        <begin position="1"/>
        <end position="225"/>
    </location>
</feature>
<feature type="region of interest" description="Unknown">
    <location>
        <begin position="1"/>
        <end position="89"/>
    </location>
</feature>
<feature type="region of interest" description="Riboflavin kinase">
    <location>
        <begin position="90"/>
        <end position="225"/>
    </location>
</feature>
<feature type="binding site" evidence="1">
    <location>
        <begin position="99"/>
        <end position="104"/>
    </location>
    <ligand>
        <name>CDP</name>
        <dbReference type="ChEBI" id="CHEBI:58069"/>
    </ligand>
</feature>
<feature type="binding site" evidence="1">
    <location>
        <position position="128"/>
    </location>
    <ligand>
        <name>Mg(2+)</name>
        <dbReference type="ChEBI" id="CHEBI:18420"/>
    </ligand>
</feature>
<feature type="binding site" evidence="1">
    <location>
        <position position="130"/>
    </location>
    <ligand>
        <name>Mg(2+)</name>
        <dbReference type="ChEBI" id="CHEBI:18420"/>
    </ligand>
</feature>
<feature type="binding site" evidence="1">
    <location>
        <position position="185"/>
    </location>
    <ligand>
        <name>FMN</name>
        <dbReference type="ChEBI" id="CHEBI:58210"/>
    </ligand>
</feature>
<feature type="binding site" evidence="1">
    <location>
        <position position="193"/>
    </location>
    <ligand>
        <name>FMN</name>
        <dbReference type="ChEBI" id="CHEBI:58210"/>
    </ligand>
</feature>
<feature type="binding site" evidence="1">
    <location>
        <begin position="198"/>
        <end position="201"/>
    </location>
    <ligand>
        <name>CDP</name>
        <dbReference type="ChEBI" id="CHEBI:58069"/>
    </ligand>
</feature>
<organism>
    <name type="scientific">Methanosarcina barkeri (strain Fusaro / DSM 804)</name>
    <dbReference type="NCBI Taxonomy" id="269797"/>
    <lineage>
        <taxon>Archaea</taxon>
        <taxon>Methanobacteriati</taxon>
        <taxon>Methanobacteriota</taxon>
        <taxon>Stenosarchaea group</taxon>
        <taxon>Methanomicrobia</taxon>
        <taxon>Methanosarcinales</taxon>
        <taxon>Methanosarcinaceae</taxon>
        <taxon>Methanosarcina</taxon>
    </lineage>
</organism>
<gene>
    <name type="primary">ribK</name>
    <name type="ordered locus">Mbar_A1523</name>
</gene>